<proteinExistence type="evidence at protein level"/>
<dbReference type="EMBL" id="AF288387">
    <property type="protein sequence ID" value="AAK20030.1"/>
    <property type="molecule type" value="mRNA"/>
</dbReference>
<dbReference type="EMBL" id="AF361353">
    <property type="protein sequence ID" value="AAL50048.1"/>
    <property type="molecule type" value="mRNA"/>
</dbReference>
<dbReference type="EMBL" id="AF458897">
    <property type="protein sequence ID" value="AAM00594.1"/>
    <property type="molecule type" value="mRNA"/>
</dbReference>
<dbReference type="EMBL" id="BC069332">
    <property type="protein sequence ID" value="AAH69332.1"/>
    <property type="molecule type" value="mRNA"/>
</dbReference>
<dbReference type="EMBL" id="BC093869">
    <property type="protein sequence ID" value="AAH93869.1"/>
    <property type="molecule type" value="mRNA"/>
</dbReference>
<dbReference type="EMBL" id="BC113503">
    <property type="protein sequence ID" value="AAI13504.1"/>
    <property type="molecule type" value="mRNA"/>
</dbReference>
<dbReference type="CCDS" id="CCDS12868.1"/>
<dbReference type="RefSeq" id="NP_114102.2">
    <property type="nucleotide sequence ID" value="NM_031896.4"/>
</dbReference>
<dbReference type="RefSeq" id="XP_016882582.1">
    <property type="nucleotide sequence ID" value="XM_017027093.1"/>
</dbReference>
<dbReference type="SMR" id="P62955"/>
<dbReference type="BioGRID" id="121870">
    <property type="interactions" value="26"/>
</dbReference>
<dbReference type="FunCoup" id="P62955">
    <property type="interactions" value="614"/>
</dbReference>
<dbReference type="IntAct" id="P62955">
    <property type="interactions" value="19"/>
</dbReference>
<dbReference type="STRING" id="9606.ENSP00000375647"/>
<dbReference type="ChEMBL" id="CHEMBL2363032"/>
<dbReference type="DrugBank" id="DB13746">
    <property type="generic name" value="Bioallethrin"/>
</dbReference>
<dbReference type="DrugBank" id="DB11148">
    <property type="generic name" value="Butamben"/>
</dbReference>
<dbReference type="DrugBank" id="DB09235">
    <property type="generic name" value="Efonidipine"/>
</dbReference>
<dbReference type="DrugBank" id="DB00228">
    <property type="generic name" value="Enflurane"/>
</dbReference>
<dbReference type="DrugBank" id="DB00153">
    <property type="generic name" value="Ergocalciferol"/>
</dbReference>
<dbReference type="DrugBank" id="DB00622">
    <property type="generic name" value="Nicardipine"/>
</dbReference>
<dbReference type="DrugBank" id="DB00661">
    <property type="generic name" value="Verapamil"/>
</dbReference>
<dbReference type="TCDB" id="8.A.16.2.5">
    <property type="family name" value="the ca(+) channel auxiliary subunit Gama1-Gama8 (ccaGama) family"/>
</dbReference>
<dbReference type="iPTMnet" id="P62955"/>
<dbReference type="PhosphoSitePlus" id="P62955"/>
<dbReference type="SwissPalm" id="P62955"/>
<dbReference type="BioMuta" id="CACNG7"/>
<dbReference type="DMDM" id="51702249"/>
<dbReference type="MassIVE" id="P62955"/>
<dbReference type="PaxDb" id="9606-ENSP00000375647"/>
<dbReference type="PeptideAtlas" id="P62955"/>
<dbReference type="ProteomicsDB" id="57459"/>
<dbReference type="Antibodypedia" id="32765">
    <property type="antibodies" value="112 antibodies from 23 providers"/>
</dbReference>
<dbReference type="DNASU" id="59284"/>
<dbReference type="Ensembl" id="ENST00000222212.6">
    <property type="protein sequence ID" value="ENSP00000222212.2"/>
    <property type="gene ID" value="ENSG00000105605.8"/>
</dbReference>
<dbReference type="Ensembl" id="ENST00000391767.6">
    <property type="protein sequence ID" value="ENSP00000375647.1"/>
    <property type="gene ID" value="ENSG00000105605.8"/>
</dbReference>
<dbReference type="GeneID" id="59284"/>
<dbReference type="KEGG" id="hsa:59284"/>
<dbReference type="MANE-Select" id="ENST00000391767.6">
    <property type="protein sequence ID" value="ENSP00000375647.1"/>
    <property type="RefSeq nucleotide sequence ID" value="NM_031896.5"/>
    <property type="RefSeq protein sequence ID" value="NP_114102.2"/>
</dbReference>
<dbReference type="UCSC" id="uc002qcr.3">
    <property type="organism name" value="human"/>
</dbReference>
<dbReference type="AGR" id="HGNC:13626"/>
<dbReference type="CTD" id="59284"/>
<dbReference type="DisGeNET" id="59284"/>
<dbReference type="GeneCards" id="CACNG7"/>
<dbReference type="HGNC" id="HGNC:13626">
    <property type="gene designation" value="CACNG7"/>
</dbReference>
<dbReference type="HPA" id="ENSG00000105605">
    <property type="expression patterns" value="Tissue enriched (brain)"/>
</dbReference>
<dbReference type="MIM" id="606899">
    <property type="type" value="gene"/>
</dbReference>
<dbReference type="neXtProt" id="NX_P62955"/>
<dbReference type="OpenTargets" id="ENSG00000105605"/>
<dbReference type="PharmGKB" id="PA26021"/>
<dbReference type="VEuPathDB" id="HostDB:ENSG00000105605"/>
<dbReference type="eggNOG" id="ENOG502QTQ7">
    <property type="taxonomic scope" value="Eukaryota"/>
</dbReference>
<dbReference type="GeneTree" id="ENSGT01050000244961"/>
<dbReference type="HOGENOM" id="CLU_053704_1_1_1"/>
<dbReference type="InParanoid" id="P62955"/>
<dbReference type="OMA" id="QCISIDY"/>
<dbReference type="OrthoDB" id="5917530at2759"/>
<dbReference type="PAN-GO" id="P62955">
    <property type="GO annotations" value="10 GO annotations based on evolutionary models"/>
</dbReference>
<dbReference type="PhylomeDB" id="P62955"/>
<dbReference type="TreeFam" id="TF327980"/>
<dbReference type="PathwayCommons" id="P62955"/>
<dbReference type="Reactome" id="R-HSA-5576892">
    <property type="pathway name" value="Phase 0 - rapid depolarisation"/>
</dbReference>
<dbReference type="Reactome" id="R-HSA-5576893">
    <property type="pathway name" value="Phase 2 - plateau phase"/>
</dbReference>
<dbReference type="Reactome" id="R-HSA-9856532">
    <property type="pathway name" value="Mechanical load activates signaling by PIEZO1 and integrins in osteocytes"/>
</dbReference>
<dbReference type="SignaLink" id="P62955"/>
<dbReference type="BioGRID-ORCS" id="59284">
    <property type="hits" value="18 hits in 1142 CRISPR screens"/>
</dbReference>
<dbReference type="ChiTaRS" id="CACNG7">
    <property type="organism name" value="human"/>
</dbReference>
<dbReference type="GenomeRNAi" id="59284"/>
<dbReference type="Pharos" id="P62955">
    <property type="development level" value="Tdark"/>
</dbReference>
<dbReference type="PRO" id="PR:P62955"/>
<dbReference type="Proteomes" id="UP000005640">
    <property type="component" value="Chromosome 19"/>
</dbReference>
<dbReference type="RNAct" id="P62955">
    <property type="molecule type" value="protein"/>
</dbReference>
<dbReference type="Bgee" id="ENSG00000105605">
    <property type="expression patterns" value="Expressed in cortical plate and 81 other cell types or tissues"/>
</dbReference>
<dbReference type="ExpressionAtlas" id="P62955">
    <property type="expression patterns" value="baseline and differential"/>
</dbReference>
<dbReference type="GO" id="GO:0032281">
    <property type="term" value="C:AMPA glutamate receptor complex"/>
    <property type="evidence" value="ECO:0000250"/>
    <property type="project" value="UniProtKB"/>
</dbReference>
<dbReference type="GO" id="GO:0044300">
    <property type="term" value="C:cerebellar mossy fiber"/>
    <property type="evidence" value="ECO:0007669"/>
    <property type="project" value="Ensembl"/>
</dbReference>
<dbReference type="GO" id="GO:0005769">
    <property type="term" value="C:early endosome"/>
    <property type="evidence" value="ECO:0007669"/>
    <property type="project" value="Ensembl"/>
</dbReference>
<dbReference type="GO" id="GO:0098978">
    <property type="term" value="C:glutamatergic synapse"/>
    <property type="evidence" value="ECO:0007669"/>
    <property type="project" value="Ensembl"/>
</dbReference>
<dbReference type="GO" id="GO:1990454">
    <property type="term" value="C:L-type voltage-gated calcium channel complex"/>
    <property type="evidence" value="ECO:0000314"/>
    <property type="project" value="UniProtKB"/>
</dbReference>
<dbReference type="GO" id="GO:0043025">
    <property type="term" value="C:neuronal cell body"/>
    <property type="evidence" value="ECO:0007669"/>
    <property type="project" value="Ensembl"/>
</dbReference>
<dbReference type="GO" id="GO:0005886">
    <property type="term" value="C:plasma membrane"/>
    <property type="evidence" value="ECO:0000304"/>
    <property type="project" value="Reactome"/>
</dbReference>
<dbReference type="GO" id="GO:0098839">
    <property type="term" value="C:postsynaptic density membrane"/>
    <property type="evidence" value="ECO:0000318"/>
    <property type="project" value="GO_Central"/>
</dbReference>
<dbReference type="GO" id="GO:0005891">
    <property type="term" value="C:voltage-gated calcium channel complex"/>
    <property type="evidence" value="ECO:0000303"/>
    <property type="project" value="UniProtKB"/>
</dbReference>
<dbReference type="GO" id="GO:0005246">
    <property type="term" value="F:calcium channel regulator activity"/>
    <property type="evidence" value="ECO:0000314"/>
    <property type="project" value="UniProtKB"/>
</dbReference>
<dbReference type="GO" id="GO:0016247">
    <property type="term" value="F:channel regulator activity"/>
    <property type="evidence" value="ECO:0000318"/>
    <property type="project" value="GO_Central"/>
</dbReference>
<dbReference type="GO" id="GO:0005245">
    <property type="term" value="F:voltage-gated calcium channel activity"/>
    <property type="evidence" value="ECO:0000318"/>
    <property type="project" value="GO_Central"/>
</dbReference>
<dbReference type="GO" id="GO:0006816">
    <property type="term" value="P:calcium ion transport"/>
    <property type="evidence" value="ECO:0000303"/>
    <property type="project" value="UniProtKB"/>
</dbReference>
<dbReference type="GO" id="GO:0099645">
    <property type="term" value="P:neurotransmitter receptor localization to postsynaptic specialization membrane"/>
    <property type="evidence" value="ECO:0007669"/>
    <property type="project" value="Ensembl"/>
</dbReference>
<dbReference type="GO" id="GO:1903861">
    <property type="term" value="P:positive regulation of dendrite extension"/>
    <property type="evidence" value="ECO:0007669"/>
    <property type="project" value="Ensembl"/>
</dbReference>
<dbReference type="GO" id="GO:0051968">
    <property type="term" value="P:positive regulation of synaptic transmission, glutamatergic"/>
    <property type="evidence" value="ECO:0000318"/>
    <property type="project" value="GO_Central"/>
</dbReference>
<dbReference type="GO" id="GO:0098970">
    <property type="term" value="P:postsynaptic neurotransmitter receptor diffusion trapping"/>
    <property type="evidence" value="ECO:0000318"/>
    <property type="project" value="GO_Central"/>
</dbReference>
<dbReference type="GO" id="GO:2000311">
    <property type="term" value="P:regulation of AMPA receptor activity"/>
    <property type="evidence" value="ECO:0000314"/>
    <property type="project" value="UniProtKB"/>
</dbReference>
<dbReference type="GO" id="GO:0043488">
    <property type="term" value="P:regulation of mRNA stability"/>
    <property type="evidence" value="ECO:0007669"/>
    <property type="project" value="Ensembl"/>
</dbReference>
<dbReference type="GO" id="GO:0019226">
    <property type="term" value="P:transmission of nerve impulse"/>
    <property type="evidence" value="ECO:0000318"/>
    <property type="project" value="GO_Central"/>
</dbReference>
<dbReference type="FunFam" id="1.20.140.150:FF:000003">
    <property type="entry name" value="Voltage-dependent calcium channel gamma-7 subunit"/>
    <property type="match status" value="1"/>
</dbReference>
<dbReference type="Gene3D" id="1.20.140.150">
    <property type="match status" value="1"/>
</dbReference>
<dbReference type="InterPro" id="IPR051072">
    <property type="entry name" value="CACNG_subunit"/>
</dbReference>
<dbReference type="InterPro" id="IPR004031">
    <property type="entry name" value="PMP22/EMP/MP20/Claudin"/>
</dbReference>
<dbReference type="InterPro" id="IPR008371">
    <property type="entry name" value="VDCC_g7su"/>
</dbReference>
<dbReference type="InterPro" id="IPR008368">
    <property type="entry name" value="VDCC_gsu"/>
</dbReference>
<dbReference type="PANTHER" id="PTHR12107">
    <property type="entry name" value="VOLTAGE-DEPENDENT CALCIUM CHANNEL GAMMA SUBUNIT"/>
    <property type="match status" value="1"/>
</dbReference>
<dbReference type="PANTHER" id="PTHR12107:SF12">
    <property type="entry name" value="VOLTAGE-DEPENDENT CALCIUM CHANNEL GAMMA-7 SUBUNIT"/>
    <property type="match status" value="1"/>
</dbReference>
<dbReference type="Pfam" id="PF13903">
    <property type="entry name" value="Claudin_2"/>
    <property type="match status" value="1"/>
</dbReference>
<dbReference type="PRINTS" id="PR01792">
    <property type="entry name" value="VDCCGAMMA"/>
</dbReference>
<dbReference type="PRINTS" id="PR01795">
    <property type="entry name" value="VDCCGAMMA7"/>
</dbReference>
<accession>P62955</accession>
<accession>Q52LL8</accession>
<accession>Q8VBX3</accession>
<accession>Q8WXS6</accession>
<accession>Q9BXT1</accession>
<gene>
    <name type="primary">CACNG7</name>
</gene>
<organism>
    <name type="scientific">Homo sapiens</name>
    <name type="common">Human</name>
    <dbReference type="NCBI Taxonomy" id="9606"/>
    <lineage>
        <taxon>Eukaryota</taxon>
        <taxon>Metazoa</taxon>
        <taxon>Chordata</taxon>
        <taxon>Craniata</taxon>
        <taxon>Vertebrata</taxon>
        <taxon>Euteleostomi</taxon>
        <taxon>Mammalia</taxon>
        <taxon>Eutheria</taxon>
        <taxon>Euarchontoglires</taxon>
        <taxon>Primates</taxon>
        <taxon>Haplorrhini</taxon>
        <taxon>Catarrhini</taxon>
        <taxon>Hominidae</taxon>
        <taxon>Homo</taxon>
    </lineage>
</organism>
<sequence length="275" mass="31003">MSHCSSRALTLLSSVFGACGLLLVGIAVSTDYWLYMEEGTVLPQNQTTEVKMALHAGLWRVCFFAGREKGRCVASEYFLEPEINLVTENTENILKTVRTATPFPMVSLFLVFTAFVISNIGHIRPQRTILAFVSGIFFILSGLSLVVGLVLYISSINDEVMNRPSSSEQYFHYRYGWSFAFAASSFLLKEGAGVMSVYLFTKRYAEEEMYRPHPAFYRPRLSDCSDYSGQFLQPEAWRRGRSPSDISSDVSIQMTQNYPPAIKYPDHLHISTSPC</sequence>
<keyword id="KW-0106">Calcium</keyword>
<keyword id="KW-0107">Calcium channel</keyword>
<keyword id="KW-0109">Calcium transport</keyword>
<keyword id="KW-1003">Cell membrane</keyword>
<keyword id="KW-0407">Ion channel</keyword>
<keyword id="KW-0406">Ion transport</keyword>
<keyword id="KW-0472">Membrane</keyword>
<keyword id="KW-0597">Phosphoprotein</keyword>
<keyword id="KW-1267">Proteomics identification</keyword>
<keyword id="KW-1185">Reference proteome</keyword>
<keyword id="KW-0812">Transmembrane</keyword>
<keyword id="KW-1133">Transmembrane helix</keyword>
<keyword id="KW-0813">Transport</keyword>
<keyword id="KW-0851">Voltage-gated channel</keyword>
<protein>
    <recommendedName>
        <fullName>Voltage-dependent calcium channel gamma-7 subunit</fullName>
    </recommendedName>
    <alternativeName>
        <fullName>Neuronal voltage-gated calcium channel gamma-7 subunit</fullName>
    </alternativeName>
    <alternativeName>
        <fullName>Transmembrane AMPAR regulatory protein gamma-7</fullName>
        <shortName>TARP gamma-7</shortName>
    </alternativeName>
</protein>
<evidence type="ECO:0000250" key="1">
    <source>
        <dbReference type="UniProtKB" id="P62956"/>
    </source>
</evidence>
<evidence type="ECO:0000255" key="2"/>
<evidence type="ECO:0000269" key="3">
    <source>
    </source>
</evidence>
<evidence type="ECO:0000269" key="4">
    <source>
    </source>
</evidence>
<evidence type="ECO:0000269" key="5">
    <source>
    </source>
</evidence>
<evidence type="ECO:0000305" key="6"/>
<evidence type="ECO:0000305" key="7">
    <source>
    </source>
</evidence>
<name>CCG7_HUMAN</name>
<reference key="1">
    <citation type="journal article" date="2001" name="Genomics">
        <title>A cluster of three novel Ca(2+) channel gamma subunit genes on chromosome 19q13.4: evolution and expression profile of the gamma subunit gene family.</title>
        <authorList>
            <person name="Burgess D.L."/>
            <person name="Gefrides L.A."/>
            <person name="Foreman P.J."/>
            <person name="Noebels J.L."/>
        </authorList>
    </citation>
    <scope>NUCLEOTIDE SEQUENCE [MRNA]</scope>
    <scope>TISSUE SPECIFICITY</scope>
</reference>
<reference key="2">
    <citation type="journal article" date="2001" name="Gene">
        <title>Calcium channel gamma subunits provide insights into the evolution of this gene family.</title>
        <authorList>
            <person name="Chu P.-J."/>
            <person name="Robertson H.M."/>
            <person name="Best P.M."/>
        </authorList>
    </citation>
    <scope>NUCLEOTIDE SEQUENCE [MRNA]</scope>
</reference>
<reference key="3">
    <citation type="journal article" date="2002" name="EMBO J.">
        <title>The novel product of a five-exon stargazin-related gene abolishes CaV2.2 calcium channel expression.</title>
        <authorList>
            <person name="Moss F.J."/>
            <person name="Viard P."/>
            <person name="Davies A."/>
            <person name="Bertaso F."/>
            <person name="Page K.M."/>
            <person name="Graham A."/>
            <person name="Canti C."/>
            <person name="Plumpton M."/>
            <person name="Plumpton C."/>
            <person name="Clare J.J."/>
            <person name="Dolphin A.C."/>
        </authorList>
    </citation>
    <scope>NUCLEOTIDE SEQUENCE [MRNA]</scope>
</reference>
<reference key="4">
    <citation type="journal article" date="2004" name="Genome Res.">
        <title>The status, quality, and expansion of the NIH full-length cDNA project: the Mammalian Gene Collection (MGC).</title>
        <authorList>
            <consortium name="The MGC Project Team"/>
        </authorList>
    </citation>
    <scope>NUCLEOTIDE SEQUENCE [LARGE SCALE MRNA]</scope>
    <source>
        <tissue>Brain</tissue>
    </source>
</reference>
<reference key="5">
    <citation type="journal article" date="2010" name="Neuron">
        <title>Hippocampal AMPA receptor gating controlled by both TARP and cornichon proteins.</title>
        <authorList>
            <person name="Kato A.S."/>
            <person name="Gill M.B."/>
            <person name="Ho M.T."/>
            <person name="Yu H."/>
            <person name="Tu Y."/>
            <person name="Siuda E.R."/>
            <person name="Wang H."/>
            <person name="Qian Y.W."/>
            <person name="Nisenbaum E.S."/>
            <person name="Tomita S."/>
            <person name="Bredt D.S."/>
        </authorList>
    </citation>
    <scope>FUNCTION</scope>
    <scope>SUBUNIT</scope>
</reference>
<reference key="6">
    <citation type="journal article" date="2011" name="FASEB J.">
        <title>Cardiac L-type calcium channel (Cav1.2) associates with gamma subunits.</title>
        <authorList>
            <person name="Yang L."/>
            <person name="Katchman A."/>
            <person name="Morrow J.P."/>
            <person name="Doshi D."/>
            <person name="Marx S.O."/>
        </authorList>
    </citation>
    <scope>FUNCTION</scope>
    <scope>TISSUE SPECIFICITY</scope>
    <scope>SUBCELLULAR LOCATION</scope>
    <scope>SUBUNIT</scope>
</reference>
<comment type="function">
    <text evidence="4 5">Regulates the activity of L-type calcium channels that contain CACNA1C as pore-forming subunit (PubMed:21127204). Regulates the trafficking and gating properties of AMPA-selective glutamate receptors (AMPARs). Promotes their targeting to the cell membrane and synapses and modulates their gating properties by slowing their rates of activation, deactivation and desensitization and by mediating their resensitization. Displays subunit-specific AMPA receptor regulation. Shows specificity only for GRIA1 and GRIA2 (PubMed:21172611).</text>
</comment>
<comment type="subunit">
    <text evidence="4 5">Interacts with CACNA1C. Identified in a complex with the L-type calcium channel subunits CACNA1C, CACNA2D1 and either CACNB1 or CACNB2 (PubMed:21127204). Acts as an auxiliary subunit for AMPA-selective glutamate receptors (AMPARs), such as GRIA1 and GRIA2 (PubMed:21172611).</text>
</comment>
<comment type="interaction">
    <interactant intactId="EBI-17499011">
        <id>P62955</id>
    </interactant>
    <interactant intactId="EBI-17498703">
        <id>Q9HBV2</id>
        <label>SPACA1</label>
    </interactant>
    <organismsDiffer>false</organismsDiffer>
    <experiments>3</experiments>
</comment>
<comment type="subcellular location">
    <subcellularLocation>
        <location evidence="7">Cell membrane</location>
        <topology evidence="6">Multi-pass membrane protein</topology>
    </subcellularLocation>
</comment>
<comment type="tissue specificity">
    <text evidence="3 4">Detected in heart left ventricle (PubMed:21127204). Widely expressed.</text>
</comment>
<comment type="similarity">
    <text evidence="6">Belongs to the PMP-22/EMP/MP20 family. CACNG subfamily.</text>
</comment>
<feature type="chain" id="PRO_0000164687" description="Voltage-dependent calcium channel gamma-7 subunit">
    <location>
        <begin position="1"/>
        <end position="275"/>
    </location>
</feature>
<feature type="transmembrane region" description="Helical" evidence="2">
    <location>
        <begin position="8"/>
        <end position="28"/>
    </location>
</feature>
<feature type="transmembrane region" description="Helical" evidence="2">
    <location>
        <begin position="103"/>
        <end position="123"/>
    </location>
</feature>
<feature type="transmembrane region" description="Helical" evidence="2">
    <location>
        <begin position="129"/>
        <end position="149"/>
    </location>
</feature>
<feature type="transmembrane region" description="Helical" evidence="2">
    <location>
        <begin position="179"/>
        <end position="199"/>
    </location>
</feature>
<feature type="modified residue" description="Phosphoserine" evidence="1">
    <location>
        <position position="222"/>
    </location>
</feature>
<feature type="modified residue" description="Phosphoserine" evidence="1">
    <location>
        <position position="225"/>
    </location>
</feature>
<feature type="modified residue" description="Phosphoserine" evidence="1">
    <location>
        <position position="273"/>
    </location>
</feature>
<feature type="sequence conflict" description="In Ref. 1; AAK20030." evidence="6" ref="1">
    <original>GAGVMSVYLFTKRYAEEEMYRPHPAFYRPRLSDCSDYSGQFLQPEAWRRGRSPSDISSDVSIQMTQNYPPAIKYPDHLHISTSPC</original>
    <variation>VTSVGPRL</variation>
    <location>
        <begin position="191"/>
        <end position="275"/>
    </location>
</feature>